<feature type="chain" id="PRO_1000197280" description="3-hydroxyacyl-[acyl-carrier-protein] dehydratase FabZ">
    <location>
        <begin position="1"/>
        <end position="157"/>
    </location>
</feature>
<feature type="active site" evidence="1">
    <location>
        <position position="58"/>
    </location>
</feature>
<evidence type="ECO:0000255" key="1">
    <source>
        <dbReference type="HAMAP-Rule" id="MF_00406"/>
    </source>
</evidence>
<name>FABZ_BRUA1</name>
<reference key="1">
    <citation type="journal article" date="2008" name="PLoS ONE">
        <title>Genome sequence of Brucella abortus vaccine strain S19 compared to virulent strains yields candidate virulence genes.</title>
        <authorList>
            <person name="Crasta O.R."/>
            <person name="Folkerts O."/>
            <person name="Fei Z."/>
            <person name="Mane S.P."/>
            <person name="Evans C."/>
            <person name="Martino-Catt S."/>
            <person name="Bricker B."/>
            <person name="Yu G."/>
            <person name="Du L."/>
            <person name="Sobral B.W."/>
        </authorList>
    </citation>
    <scope>NUCLEOTIDE SEQUENCE [LARGE SCALE GENOMIC DNA]</scope>
    <source>
        <strain>S19</strain>
    </source>
</reference>
<dbReference type="EC" id="4.2.1.59" evidence="1"/>
<dbReference type="EMBL" id="CP000887">
    <property type="protein sequence ID" value="ACD72599.1"/>
    <property type="molecule type" value="Genomic_DNA"/>
</dbReference>
<dbReference type="RefSeq" id="WP_002964280.1">
    <property type="nucleotide sequence ID" value="NC_010742.1"/>
</dbReference>
<dbReference type="SMR" id="B2S602"/>
<dbReference type="GeneID" id="93016513"/>
<dbReference type="KEGG" id="bmc:BAbS19_I10920"/>
<dbReference type="HOGENOM" id="CLU_078912_1_2_5"/>
<dbReference type="Proteomes" id="UP000002565">
    <property type="component" value="Chromosome 1"/>
</dbReference>
<dbReference type="GO" id="GO:0005737">
    <property type="term" value="C:cytoplasm"/>
    <property type="evidence" value="ECO:0007669"/>
    <property type="project" value="UniProtKB-SubCell"/>
</dbReference>
<dbReference type="GO" id="GO:0016020">
    <property type="term" value="C:membrane"/>
    <property type="evidence" value="ECO:0007669"/>
    <property type="project" value="GOC"/>
</dbReference>
<dbReference type="GO" id="GO:0019171">
    <property type="term" value="F:(3R)-hydroxyacyl-[acyl-carrier-protein] dehydratase activity"/>
    <property type="evidence" value="ECO:0007669"/>
    <property type="project" value="UniProtKB-EC"/>
</dbReference>
<dbReference type="GO" id="GO:0006633">
    <property type="term" value="P:fatty acid biosynthetic process"/>
    <property type="evidence" value="ECO:0007669"/>
    <property type="project" value="UniProtKB-UniRule"/>
</dbReference>
<dbReference type="GO" id="GO:0009245">
    <property type="term" value="P:lipid A biosynthetic process"/>
    <property type="evidence" value="ECO:0007669"/>
    <property type="project" value="UniProtKB-UniRule"/>
</dbReference>
<dbReference type="CDD" id="cd01288">
    <property type="entry name" value="FabZ"/>
    <property type="match status" value="1"/>
</dbReference>
<dbReference type="FunFam" id="3.10.129.10:FF:000001">
    <property type="entry name" value="3-hydroxyacyl-[acyl-carrier-protein] dehydratase FabZ"/>
    <property type="match status" value="1"/>
</dbReference>
<dbReference type="Gene3D" id="3.10.129.10">
    <property type="entry name" value="Hotdog Thioesterase"/>
    <property type="match status" value="1"/>
</dbReference>
<dbReference type="HAMAP" id="MF_00406">
    <property type="entry name" value="FabZ"/>
    <property type="match status" value="1"/>
</dbReference>
<dbReference type="InterPro" id="IPR013114">
    <property type="entry name" value="FabA_FabZ"/>
</dbReference>
<dbReference type="InterPro" id="IPR010084">
    <property type="entry name" value="FabZ"/>
</dbReference>
<dbReference type="InterPro" id="IPR029069">
    <property type="entry name" value="HotDog_dom_sf"/>
</dbReference>
<dbReference type="NCBIfam" id="TIGR01750">
    <property type="entry name" value="fabZ"/>
    <property type="match status" value="1"/>
</dbReference>
<dbReference type="NCBIfam" id="NF000582">
    <property type="entry name" value="PRK00006.1"/>
    <property type="match status" value="1"/>
</dbReference>
<dbReference type="PANTHER" id="PTHR30272">
    <property type="entry name" value="3-HYDROXYACYL-[ACYL-CARRIER-PROTEIN] DEHYDRATASE"/>
    <property type="match status" value="1"/>
</dbReference>
<dbReference type="PANTHER" id="PTHR30272:SF1">
    <property type="entry name" value="3-HYDROXYACYL-[ACYL-CARRIER-PROTEIN] DEHYDRATASE"/>
    <property type="match status" value="1"/>
</dbReference>
<dbReference type="Pfam" id="PF07977">
    <property type="entry name" value="FabA"/>
    <property type="match status" value="1"/>
</dbReference>
<dbReference type="SUPFAM" id="SSF54637">
    <property type="entry name" value="Thioesterase/thiol ester dehydrase-isomerase"/>
    <property type="match status" value="1"/>
</dbReference>
<keyword id="KW-0963">Cytoplasm</keyword>
<keyword id="KW-0441">Lipid A biosynthesis</keyword>
<keyword id="KW-0444">Lipid biosynthesis</keyword>
<keyword id="KW-0443">Lipid metabolism</keyword>
<keyword id="KW-0456">Lyase</keyword>
<organism>
    <name type="scientific">Brucella abortus (strain S19)</name>
    <dbReference type="NCBI Taxonomy" id="430066"/>
    <lineage>
        <taxon>Bacteria</taxon>
        <taxon>Pseudomonadati</taxon>
        <taxon>Pseudomonadota</taxon>
        <taxon>Alphaproteobacteria</taxon>
        <taxon>Hyphomicrobiales</taxon>
        <taxon>Brucellaceae</taxon>
        <taxon>Brucella/Ochrobactrum group</taxon>
        <taxon>Brucella</taxon>
    </lineage>
</organism>
<gene>
    <name evidence="1" type="primary">fabZ</name>
    <name type="ordered locus">BAbS19_I10920</name>
</gene>
<protein>
    <recommendedName>
        <fullName evidence="1">3-hydroxyacyl-[acyl-carrier-protein] dehydratase FabZ</fullName>
        <ecNumber evidence="1">4.2.1.59</ecNumber>
    </recommendedName>
    <alternativeName>
        <fullName evidence="1">(3R)-hydroxymyristoyl-[acyl-carrier-protein] dehydratase</fullName>
        <shortName evidence="1">(3R)-hydroxymyristoyl-ACP dehydrase</shortName>
    </alternativeName>
    <alternativeName>
        <fullName evidence="1">Beta-hydroxyacyl-ACP dehydratase</fullName>
    </alternativeName>
</protein>
<proteinExistence type="inferred from homology"/>
<accession>B2S602</accession>
<comment type="function">
    <text evidence="1">Involved in unsaturated fatty acids biosynthesis. Catalyzes the dehydration of short chain beta-hydroxyacyl-ACPs and long chain saturated and unsaturated beta-hydroxyacyl-ACPs.</text>
</comment>
<comment type="catalytic activity">
    <reaction evidence="1">
        <text>a (3R)-hydroxyacyl-[ACP] = a (2E)-enoyl-[ACP] + H2O</text>
        <dbReference type="Rhea" id="RHEA:13097"/>
        <dbReference type="Rhea" id="RHEA-COMP:9925"/>
        <dbReference type="Rhea" id="RHEA-COMP:9945"/>
        <dbReference type="ChEBI" id="CHEBI:15377"/>
        <dbReference type="ChEBI" id="CHEBI:78784"/>
        <dbReference type="ChEBI" id="CHEBI:78827"/>
        <dbReference type="EC" id="4.2.1.59"/>
    </reaction>
</comment>
<comment type="subcellular location">
    <subcellularLocation>
        <location evidence="1">Cytoplasm</location>
    </subcellularLocation>
</comment>
<comment type="similarity">
    <text evidence="1">Belongs to the thioester dehydratase family. FabZ subfamily.</text>
</comment>
<sequence length="157" mass="17214">MSDDNQTKLEAADIQALLAVLPHRYPFLLIDRIVDIDGDVSATGIKNVTINEPHFTGHFPENPIMPGVLIVEAMAQTAGAISLLQRKTGRPGVVYFMTIDNAKFRRPVVPGDRLLLYVKKIKQRANISKYECVAEVDGVKVAEAEVAAMISVADENL</sequence>